<proteinExistence type="evidence at protein level"/>
<feature type="signal peptide" evidence="2">
    <location>
        <begin position="1"/>
        <end position="19"/>
    </location>
</feature>
<feature type="propeptide" id="PRO_0000272033" evidence="4">
    <location>
        <begin position="20"/>
        <end position="23"/>
    </location>
</feature>
<feature type="chain" id="PRO_0000272034" description="Phospholipase A2 AP-PLA2-I">
    <location>
        <begin position="24"/>
        <end position="159"/>
    </location>
</feature>
<feature type="active site" evidence="3">
    <location>
        <position position="72"/>
    </location>
</feature>
<feature type="active site" evidence="3">
    <location>
        <position position="133"/>
    </location>
</feature>
<feature type="binding site" evidence="1">
    <location>
        <position position="52"/>
    </location>
    <ligand>
        <name>Ca(2+)</name>
        <dbReference type="ChEBI" id="CHEBI:29108"/>
    </ligand>
</feature>
<feature type="binding site" evidence="1">
    <location>
        <position position="54"/>
    </location>
    <ligand>
        <name>Ca(2+)</name>
        <dbReference type="ChEBI" id="CHEBI:29108"/>
    </ligand>
</feature>
<feature type="binding site" evidence="1">
    <location>
        <position position="56"/>
    </location>
    <ligand>
        <name>Ca(2+)</name>
        <dbReference type="ChEBI" id="CHEBI:29108"/>
    </ligand>
</feature>
<feature type="binding site" evidence="1">
    <location>
        <position position="73"/>
    </location>
    <ligand>
        <name>Ca(2+)</name>
        <dbReference type="ChEBI" id="CHEBI:29108"/>
    </ligand>
</feature>
<feature type="disulfide bond" evidence="1">
    <location>
        <begin position="51"/>
        <end position="159"/>
    </location>
</feature>
<feature type="disulfide bond" evidence="1">
    <location>
        <begin position="53"/>
        <end position="69"/>
    </location>
</feature>
<feature type="disulfide bond" evidence="1">
    <location>
        <begin position="68"/>
        <end position="139"/>
    </location>
</feature>
<feature type="disulfide bond" evidence="1">
    <location>
        <begin position="75"/>
        <end position="132"/>
    </location>
</feature>
<feature type="disulfide bond" evidence="1">
    <location>
        <begin position="85"/>
        <end position="125"/>
    </location>
</feature>
<feature type="disulfide bond" evidence="1">
    <location>
        <begin position="110"/>
        <end position="130"/>
    </location>
</feature>
<accession>Q3C2C2</accession>
<keyword id="KW-0106">Calcium</keyword>
<keyword id="KW-0204">Cytolysis</keyword>
<keyword id="KW-0903">Direct protein sequencing</keyword>
<keyword id="KW-1015">Disulfide bond</keyword>
<keyword id="KW-0354">Hemolysis</keyword>
<keyword id="KW-1200">Hemorrhagic toxin</keyword>
<keyword id="KW-1199">Hemostasis impairing toxin</keyword>
<keyword id="KW-0378">Hydrolase</keyword>
<keyword id="KW-0442">Lipid degradation</keyword>
<keyword id="KW-0443">Lipid metabolism</keyword>
<keyword id="KW-0479">Metal-binding</keyword>
<keyword id="KW-1185">Reference proteome</keyword>
<keyword id="KW-0964">Secreted</keyword>
<keyword id="KW-0732">Signal</keyword>
<keyword id="KW-0800">Toxin</keyword>
<evidence type="ECO:0000250" key="1"/>
<evidence type="ECO:0000255" key="2"/>
<evidence type="ECO:0000255" key="3">
    <source>
        <dbReference type="PROSITE-ProRule" id="PRU10035"/>
    </source>
</evidence>
<evidence type="ECO:0000269" key="4">
    <source>
    </source>
</evidence>
<evidence type="ECO:0000305" key="5"/>
<sequence length="159" mass="17830">MNFLVVIVTTVSLAGAASAGEIQNLYQFGKMVMCLGNLNVLEGLEYNGYGCYCGRGGKGTPLDDTDRCCKQHDECYERATDEMGCWSIETYATTYDYTKSKVSGKCTIKCKLESDYSRFTIRKKCKAFICECDRIGAQCFADKRSTFNRSLISYTKDKC</sequence>
<organism>
    <name type="scientific">Acanthaster planci</name>
    <name type="common">Crown-of-thorns starfish</name>
    <dbReference type="NCBI Taxonomy" id="133434"/>
    <lineage>
        <taxon>Eukaryota</taxon>
        <taxon>Metazoa</taxon>
        <taxon>Echinodermata</taxon>
        <taxon>Eleutherozoa</taxon>
        <taxon>Asterozoa</taxon>
        <taxon>Asteroidea</taxon>
        <taxon>Valvatacea</taxon>
        <taxon>Valvatida</taxon>
        <taxon>Acanthasteridae</taxon>
        <taxon>Acanthaster</taxon>
    </lineage>
</organism>
<dbReference type="EC" id="3.1.1.4"/>
<dbReference type="EMBL" id="AB211367">
    <property type="protein sequence ID" value="BAE46765.1"/>
    <property type="molecule type" value="mRNA"/>
</dbReference>
<dbReference type="RefSeq" id="XP_022079272.1">
    <property type="nucleotide sequence ID" value="XM_022223580.1"/>
</dbReference>
<dbReference type="SMR" id="Q3C2C2"/>
<dbReference type="EnsemblMetazoa" id="XM_022223580.1">
    <property type="protein sequence ID" value="XP_022079272.1"/>
    <property type="gene ID" value="LOC110973092"/>
</dbReference>
<dbReference type="GeneID" id="110973092"/>
<dbReference type="OMA" id="KIVVECW"/>
<dbReference type="OrthoDB" id="5841574at2759"/>
<dbReference type="Proteomes" id="UP000694845">
    <property type="component" value="Unplaced"/>
</dbReference>
<dbReference type="GO" id="GO:0005576">
    <property type="term" value="C:extracellular region"/>
    <property type="evidence" value="ECO:0007669"/>
    <property type="project" value="UniProtKB-SubCell"/>
</dbReference>
<dbReference type="GO" id="GO:0005509">
    <property type="term" value="F:calcium ion binding"/>
    <property type="evidence" value="ECO:0007669"/>
    <property type="project" value="InterPro"/>
</dbReference>
<dbReference type="GO" id="GO:0047498">
    <property type="term" value="F:calcium-dependent phospholipase A2 activity"/>
    <property type="evidence" value="ECO:0007669"/>
    <property type="project" value="TreeGrafter"/>
</dbReference>
<dbReference type="GO" id="GO:0005543">
    <property type="term" value="F:phospholipid binding"/>
    <property type="evidence" value="ECO:0007669"/>
    <property type="project" value="TreeGrafter"/>
</dbReference>
<dbReference type="GO" id="GO:0090729">
    <property type="term" value="F:toxin activity"/>
    <property type="evidence" value="ECO:0007669"/>
    <property type="project" value="UniProtKB-KW"/>
</dbReference>
<dbReference type="GO" id="GO:0050482">
    <property type="term" value="P:arachidonate secretion"/>
    <property type="evidence" value="ECO:0007669"/>
    <property type="project" value="InterPro"/>
</dbReference>
<dbReference type="GO" id="GO:0031640">
    <property type="term" value="P:killing of cells of another organism"/>
    <property type="evidence" value="ECO:0007669"/>
    <property type="project" value="UniProtKB-KW"/>
</dbReference>
<dbReference type="GO" id="GO:0016042">
    <property type="term" value="P:lipid catabolic process"/>
    <property type="evidence" value="ECO:0007669"/>
    <property type="project" value="UniProtKB-KW"/>
</dbReference>
<dbReference type="GO" id="GO:0006644">
    <property type="term" value="P:phospholipid metabolic process"/>
    <property type="evidence" value="ECO:0007669"/>
    <property type="project" value="InterPro"/>
</dbReference>
<dbReference type="CDD" id="cd00125">
    <property type="entry name" value="PLA2c"/>
    <property type="match status" value="1"/>
</dbReference>
<dbReference type="Gene3D" id="1.20.90.10">
    <property type="entry name" value="Phospholipase A2 domain"/>
    <property type="match status" value="1"/>
</dbReference>
<dbReference type="InterPro" id="IPR001211">
    <property type="entry name" value="PLipase_A2"/>
</dbReference>
<dbReference type="InterPro" id="IPR016090">
    <property type="entry name" value="PLipase_A2_dom"/>
</dbReference>
<dbReference type="InterPro" id="IPR036444">
    <property type="entry name" value="PLipase_A2_dom_sf"/>
</dbReference>
<dbReference type="InterPro" id="IPR033113">
    <property type="entry name" value="PLipase_A2_His_AS"/>
</dbReference>
<dbReference type="PANTHER" id="PTHR11716:SF106">
    <property type="entry name" value="PHOSPHOLIPASE A2 A2-ACTITOXIN-UCS2A-LIKE"/>
    <property type="match status" value="1"/>
</dbReference>
<dbReference type="PANTHER" id="PTHR11716">
    <property type="entry name" value="PHOSPHOLIPASE A2 FAMILY MEMBER"/>
    <property type="match status" value="1"/>
</dbReference>
<dbReference type="Pfam" id="PF00068">
    <property type="entry name" value="Phospholip_A2_1"/>
    <property type="match status" value="1"/>
</dbReference>
<dbReference type="PRINTS" id="PR00389">
    <property type="entry name" value="PHPHLIPASEA2"/>
</dbReference>
<dbReference type="SMART" id="SM00085">
    <property type="entry name" value="PA2c"/>
    <property type="match status" value="1"/>
</dbReference>
<dbReference type="SUPFAM" id="SSF48619">
    <property type="entry name" value="Phospholipase A2, PLA2"/>
    <property type="match status" value="1"/>
</dbReference>
<dbReference type="PROSITE" id="PS00118">
    <property type="entry name" value="PA2_HIS"/>
    <property type="match status" value="1"/>
</dbReference>
<comment type="function">
    <text evidence="4">Starfish phospholipase A2 (PLA2) that has hemorrhagic and capillary permeability-increasing activities and hence is considered to be deeply involved in the local inflammation. Shows hemolytic activity only in the presence of phosphatidylcholine (PC). PLA2 catalyzes the calcium-dependent hydrolysis of the 2-acyl groups in 3-sn-phosphoglycerides.</text>
</comment>
<comment type="catalytic activity">
    <reaction evidence="3">
        <text>a 1,2-diacyl-sn-glycero-3-phosphocholine + H2O = a 1-acyl-sn-glycero-3-phosphocholine + a fatty acid + H(+)</text>
        <dbReference type="Rhea" id="RHEA:15801"/>
        <dbReference type="ChEBI" id="CHEBI:15377"/>
        <dbReference type="ChEBI" id="CHEBI:15378"/>
        <dbReference type="ChEBI" id="CHEBI:28868"/>
        <dbReference type="ChEBI" id="CHEBI:57643"/>
        <dbReference type="ChEBI" id="CHEBI:58168"/>
        <dbReference type="EC" id="3.1.1.4"/>
    </reaction>
</comment>
<comment type="cofactor">
    <cofactor evidence="1">
        <name>Ca(2+)</name>
        <dbReference type="ChEBI" id="CHEBI:29108"/>
    </cofactor>
    <text evidence="1">Binds 1 Ca(2+) ion per subunit.</text>
</comment>
<comment type="subunit">
    <text>Homodimer.</text>
</comment>
<comment type="subcellular location">
    <subcellularLocation>
        <location>Secreted</location>
    </subcellularLocation>
</comment>
<comment type="tissue specificity">
    <text>Expressed by the venom gland.</text>
</comment>
<comment type="similarity">
    <text evidence="5">Belongs to the phospholipase A2 family. Group I subfamily.</text>
</comment>
<reference key="1">
    <citation type="journal article" date="2006" name="Comp. Biochem. Physiol.">
        <title>Molecular cloning of two toxic phospholipases A2 from the crown-of-thorns starfish Acanthaster planci venom.</title>
        <authorList>
            <person name="Ota E."/>
            <person name="Nagai H."/>
            <person name="Nagashima Y."/>
            <person name="Shiomi K."/>
        </authorList>
    </citation>
    <scope>NUCLEOTIDE SEQUENCE [MRNA]</scope>
    <scope>PROTEIN SEQUENCE OF 110-118 AND 127-156</scope>
</reference>
<reference key="2">
    <citation type="journal article" date="1998" name="Toxicon">
        <title>Purification and properties of phospholipases A2 from the crown-of-thorns starfish (Acanthaster planci) venom.</title>
        <authorList>
            <person name="Shiomi K.A."/>
            <person name="Kazama A."/>
            <person name="Shimakura K."/>
            <person name="Nagashima Y."/>
        </authorList>
    </citation>
    <scope>PROTEIN SEQUENCE OF 24-85</scope>
    <scope>FUNCTION</scope>
    <source>
        <tissue>Spine</tissue>
    </source>
</reference>
<name>PA21_ACAPL</name>
<protein>
    <recommendedName>
        <fullName>Phospholipase A2 AP-PLA2-I</fullName>
        <shortName>PLA2</shortName>
        <ecNumber>3.1.1.4</ecNumber>
    </recommendedName>
    <alternativeName>
        <fullName>Phosphatidylcholine 2-acylhydrolase 2</fullName>
    </alternativeName>
</protein>